<gene>
    <name evidence="9" type="primary">LPMO9B</name>
    <name evidence="8" type="synonym">cel61g</name>
    <name type="ORF">GLOTRDRAFT_63531</name>
</gene>
<feature type="signal peptide" evidence="4">
    <location>
        <begin position="1"/>
        <end position="20"/>
    </location>
</feature>
<feature type="chain" id="PRO_5004544569" description="AA9 family lytic polysaccharide monooxygenase B">
    <location>
        <begin position="21"/>
        <end position="252"/>
    </location>
</feature>
<feature type="binding site" evidence="3">
    <location>
        <position position="21"/>
    </location>
    <ligand>
        <name>Cu(2+)</name>
        <dbReference type="ChEBI" id="CHEBI:29036"/>
        <note>catalytic</note>
    </ligand>
</feature>
<feature type="binding site" evidence="3">
    <location>
        <position position="106"/>
    </location>
    <ligand>
        <name>Cu(2+)</name>
        <dbReference type="ChEBI" id="CHEBI:29036"/>
        <note>catalytic</note>
    </ligand>
</feature>
<feature type="binding site" evidence="2">
    <location>
        <position position="184"/>
    </location>
    <ligand>
        <name>O2</name>
        <dbReference type="ChEBI" id="CHEBI:15379"/>
    </ligand>
</feature>
<feature type="binding site" evidence="2">
    <location>
        <position position="193"/>
    </location>
    <ligand>
        <name>O2</name>
        <dbReference type="ChEBI" id="CHEBI:15379"/>
    </ligand>
</feature>
<feature type="binding site" evidence="3">
    <location>
        <position position="195"/>
    </location>
    <ligand>
        <name>Cu(2+)</name>
        <dbReference type="ChEBI" id="CHEBI:29036"/>
        <note>catalytic</note>
    </ligand>
</feature>
<feature type="glycosylation site" description="N-linked (GlcNAc...) asparagine" evidence="5">
    <location>
        <position position="158"/>
    </location>
</feature>
<feature type="glycosylation site" description="N-linked (GlcNAc...) asparagine" evidence="5">
    <location>
        <position position="237"/>
    </location>
</feature>
<feature type="disulfide bond" evidence="1">
    <location>
        <begin position="72"/>
        <end position="198"/>
    </location>
</feature>
<keyword id="KW-0119">Carbohydrate metabolism</keyword>
<keyword id="KW-0136">Cellulose degradation</keyword>
<keyword id="KW-0186">Copper</keyword>
<keyword id="KW-1015">Disulfide bond</keyword>
<keyword id="KW-0325">Glycoprotein</keyword>
<keyword id="KW-0479">Metal-binding</keyword>
<keyword id="KW-0503">Monooxygenase</keyword>
<keyword id="KW-0560">Oxidoreductase</keyword>
<keyword id="KW-0624">Polysaccharide degradation</keyword>
<keyword id="KW-1185">Reference proteome</keyword>
<keyword id="KW-0964">Secreted</keyword>
<keyword id="KW-0732">Signal</keyword>
<organism>
    <name type="scientific">Gloeophyllum trabeum (strain ATCC 11539 / FP-39264 / Madison 617)</name>
    <name type="common">Brown rot fungus</name>
    <dbReference type="NCBI Taxonomy" id="670483"/>
    <lineage>
        <taxon>Eukaryota</taxon>
        <taxon>Fungi</taxon>
        <taxon>Dikarya</taxon>
        <taxon>Basidiomycota</taxon>
        <taxon>Agaricomycotina</taxon>
        <taxon>Agaricomycetes</taxon>
        <taxon>Gloeophyllales</taxon>
        <taxon>Gloeophyllaceae</taxon>
        <taxon>Gloeophyllum</taxon>
    </lineage>
</organism>
<proteinExistence type="evidence at protein level"/>
<protein>
    <recommendedName>
        <fullName evidence="8">AA9 family lytic polysaccharide monooxygenase B</fullName>
        <shortName evidence="8">LPMO9B</shortName>
        <ecNumber evidence="6">1.14.99.56</ecNumber>
    </recommendedName>
    <alternativeName>
        <fullName evidence="10">Cellulase LPMO9B</fullName>
    </alternativeName>
    <alternativeName>
        <fullName evidence="10">Endo-beta-1,4-glucanase LPMO9B</fullName>
        <shortName evidence="10">Endoglucanase LPMO9B</shortName>
    </alternativeName>
    <alternativeName>
        <fullName evidence="10">Glycosyl hydrolase 61 family protein LPMO9B</fullName>
    </alternativeName>
</protein>
<reference key="1">
    <citation type="submission" date="2010-12" db="EMBL/GenBank/DDBJ databases">
        <title>Cloning of familly 61 endocelluase from G. trabeum.</title>
        <authorList>
            <person name="Kim H.M."/>
            <person name="Lee Y.G."/>
            <person name="Bae H.-J."/>
        </authorList>
    </citation>
    <scope>NUCLEOTIDE SEQUENCE [MRNA]</scope>
    <source>
        <strain>ATCC 11539 / FP-39264 / Madison 617</strain>
    </source>
</reference>
<reference key="2">
    <citation type="journal article" date="2012" name="Science">
        <title>The Paleozoic origin of enzymatic lignin decomposition reconstructed from 31 fungal genomes.</title>
        <authorList>
            <person name="Floudas D."/>
            <person name="Binder M."/>
            <person name="Riley R."/>
            <person name="Barry K."/>
            <person name="Blanchette R.A."/>
            <person name="Henrissat B."/>
            <person name="Martinez A.T."/>
            <person name="Otillar R."/>
            <person name="Spatafora J.W."/>
            <person name="Yadav J.S."/>
            <person name="Aerts A."/>
            <person name="Benoit I."/>
            <person name="Boyd A."/>
            <person name="Carlson A."/>
            <person name="Copeland A."/>
            <person name="Coutinho P.M."/>
            <person name="de Vries R.P."/>
            <person name="Ferreira P."/>
            <person name="Findley K."/>
            <person name="Foster B."/>
            <person name="Gaskell J."/>
            <person name="Glotzer D."/>
            <person name="Gorecki P."/>
            <person name="Heitman J."/>
            <person name="Hesse C."/>
            <person name="Hori C."/>
            <person name="Igarashi K."/>
            <person name="Jurgens J.A."/>
            <person name="Kallen N."/>
            <person name="Kersten P."/>
            <person name="Kohler A."/>
            <person name="Kuees U."/>
            <person name="Kumar T.K.A."/>
            <person name="Kuo A."/>
            <person name="LaButti K."/>
            <person name="Larrondo L.F."/>
            <person name="Lindquist E."/>
            <person name="Ling A."/>
            <person name="Lombard V."/>
            <person name="Lucas S."/>
            <person name="Lundell T."/>
            <person name="Martin R."/>
            <person name="McLaughlin D.J."/>
            <person name="Morgenstern I."/>
            <person name="Morin E."/>
            <person name="Murat C."/>
            <person name="Nagy L.G."/>
            <person name="Nolan M."/>
            <person name="Ohm R.A."/>
            <person name="Patyshakuliyeva A."/>
            <person name="Rokas A."/>
            <person name="Ruiz-Duenas F.J."/>
            <person name="Sabat G."/>
            <person name="Salamov A."/>
            <person name="Samejima M."/>
            <person name="Schmutz J."/>
            <person name="Slot J.C."/>
            <person name="St John F."/>
            <person name="Stenlid J."/>
            <person name="Sun H."/>
            <person name="Sun S."/>
            <person name="Syed K."/>
            <person name="Tsang A."/>
            <person name="Wiebenga A."/>
            <person name="Young D."/>
            <person name="Pisabarro A."/>
            <person name="Eastwood D.C."/>
            <person name="Martin F."/>
            <person name="Cullen D."/>
            <person name="Grigoriev I.V."/>
            <person name="Hibbett D.S."/>
        </authorList>
    </citation>
    <scope>NUCLEOTIDE SEQUENCE [LARGE SCALE GENOMIC DNA]</scope>
    <source>
        <strain>ATCC 11539 / FP-39264 / Madison 617</strain>
    </source>
</reference>
<reference key="3">
    <citation type="journal article" date="2015" name="Enzyme Microb. Technol.">
        <title>Enhanced lignocellulosic biomass hydrolysis by oxidative lytic polysaccharide monooxygenases (LPMOs) GH61 from Gloeophyllum trabeum.</title>
        <authorList>
            <person name="Jung S."/>
            <person name="Song Y."/>
            <person name="Kim H.M."/>
            <person name="Bae H.J."/>
        </authorList>
    </citation>
    <scope>FUNCTION</scope>
    <scope>CATALYTIC ACTIVITY</scope>
    <scope>BIOTECHNOLOGY</scope>
</reference>
<reference key="4">
    <citation type="journal article" date="2016" name="Appl. Environ. Microbiol.">
        <title>A Lytic Polysaccharide Monooxygenase with Broad Xyloglucan Specificity from the Brown-Rot Fungus Gloeophyllum trabeum and Its Action on Cellulose-Xyloglucan Complexes.</title>
        <authorList>
            <person name="Kojima Y."/>
            <person name="Varnai A."/>
            <person name="Ishida T."/>
            <person name="Sunagawa N."/>
            <person name="Petrovic D.M."/>
            <person name="Igarashi K."/>
            <person name="Jellison J."/>
            <person name="Goodell B."/>
            <person name="Alfredsen G."/>
            <person name="Westereng B."/>
            <person name="Eijsink V.G.H."/>
            <person name="Yoshida M."/>
        </authorList>
    </citation>
    <scope>IDENTIFICATION</scope>
    <scope>FUNCTION</scope>
</reference>
<accession>S7RK00</accession>
<accession>F8T947</accession>
<evidence type="ECO:0000250" key="1">
    <source>
        <dbReference type="UniProtKB" id="A0A5J6BJN2"/>
    </source>
</evidence>
<evidence type="ECO:0000250" key="2">
    <source>
        <dbReference type="UniProtKB" id="Q1K8B6"/>
    </source>
</evidence>
<evidence type="ECO:0000250" key="3">
    <source>
        <dbReference type="UniProtKB" id="Q7Z9M7"/>
    </source>
</evidence>
<evidence type="ECO:0000255" key="4"/>
<evidence type="ECO:0000255" key="5">
    <source>
        <dbReference type="PROSITE-ProRule" id="PRU00498"/>
    </source>
</evidence>
<evidence type="ECO:0000269" key="6">
    <source>
    </source>
</evidence>
<evidence type="ECO:0000269" key="7">
    <source>
    </source>
</evidence>
<evidence type="ECO:0000303" key="8">
    <source>
    </source>
</evidence>
<evidence type="ECO:0000303" key="9">
    <source>
    </source>
</evidence>
<evidence type="ECO:0000305" key="10"/>
<evidence type="ECO:0000305" key="11">
    <source>
    </source>
</evidence>
<name>LP9B_GLOTA</name>
<dbReference type="EC" id="1.14.99.56" evidence="6"/>
<dbReference type="EMBL" id="HQ730919">
    <property type="protein sequence ID" value="AEJ35168.1"/>
    <property type="molecule type" value="mRNA"/>
</dbReference>
<dbReference type="EMBL" id="KB469306">
    <property type="protein sequence ID" value="EPQ52959.1"/>
    <property type="molecule type" value="Genomic_DNA"/>
</dbReference>
<dbReference type="RefSeq" id="XP_007868286.1">
    <property type="nucleotide sequence ID" value="XM_007870095.1"/>
</dbReference>
<dbReference type="SMR" id="S7RK00"/>
<dbReference type="STRING" id="670483.S7RK00"/>
<dbReference type="GeneID" id="19307555"/>
<dbReference type="KEGG" id="gtr:GLOTRDRAFT_63531"/>
<dbReference type="eggNOG" id="ENOG502QVRD">
    <property type="taxonomic scope" value="Eukaryota"/>
</dbReference>
<dbReference type="HOGENOM" id="CLU_031730_1_1_1"/>
<dbReference type="OMA" id="TSADIQC"/>
<dbReference type="OrthoDB" id="4849160at2759"/>
<dbReference type="Proteomes" id="UP000030669">
    <property type="component" value="Unassembled WGS sequence"/>
</dbReference>
<dbReference type="GO" id="GO:0005576">
    <property type="term" value="C:extracellular region"/>
    <property type="evidence" value="ECO:0007669"/>
    <property type="project" value="UniProtKB-SubCell"/>
</dbReference>
<dbReference type="GO" id="GO:0046872">
    <property type="term" value="F:metal ion binding"/>
    <property type="evidence" value="ECO:0007669"/>
    <property type="project" value="UniProtKB-KW"/>
</dbReference>
<dbReference type="GO" id="GO:0004497">
    <property type="term" value="F:monooxygenase activity"/>
    <property type="evidence" value="ECO:0007669"/>
    <property type="project" value="UniProtKB-KW"/>
</dbReference>
<dbReference type="GO" id="GO:0030245">
    <property type="term" value="P:cellulose catabolic process"/>
    <property type="evidence" value="ECO:0007669"/>
    <property type="project" value="UniProtKB-KW"/>
</dbReference>
<dbReference type="CDD" id="cd21175">
    <property type="entry name" value="LPMO_AA9"/>
    <property type="match status" value="1"/>
</dbReference>
<dbReference type="Gene3D" id="2.70.50.70">
    <property type="match status" value="1"/>
</dbReference>
<dbReference type="InterPro" id="IPR049892">
    <property type="entry name" value="AA9"/>
</dbReference>
<dbReference type="InterPro" id="IPR005103">
    <property type="entry name" value="AA9_LPMO"/>
</dbReference>
<dbReference type="PANTHER" id="PTHR33353:SF6">
    <property type="entry name" value="ENDOGLUCANASE IV"/>
    <property type="match status" value="1"/>
</dbReference>
<dbReference type="PANTHER" id="PTHR33353">
    <property type="entry name" value="PUTATIVE (AFU_ORTHOLOGUE AFUA_1G12560)-RELATED"/>
    <property type="match status" value="1"/>
</dbReference>
<dbReference type="Pfam" id="PF03443">
    <property type="entry name" value="AA9"/>
    <property type="match status" value="1"/>
</dbReference>
<sequence length="252" mass="26624">MVSFTKTFFAIVACALGVQAHGYVDTLNVGGTQYTGYLPYNDPYTTPAPQRIERPIPGNGPVTALTTIDVQCNGENGGGSSPAPLVATIAAGGKIAFHWTTWPSSHVGPVITYLGKVPSSTDVTKYSPTGSDVIWFKIDEGGYSNGKWAATDVLSAQNSTWTVTIPSSLAPGQYIVRHEIIALHQAQTYPGAQSYPDCFQIRVTGSGNKTPSGSYLVSFPGAYTATTPGIAFNVYTNFTSYPIPGPAVWTGN</sequence>
<comment type="function">
    <text evidence="2 6 7">Lytic polysaccharide monooxygenase (LPMO) that depolymerizes crystalline and amorphous polysaccharides via the oxidation of scissile alpha- or beta-(1-4)-glycosidic bonds, yielding C1 or C4 oxidation products (PubMed:26138398, PubMed:27590806). Catalysis by LPMOs requires the reduction of the active-site copper from Cu(II) to Cu(I) by a reducing agent and H(2)O(2) or O(2) as a cosubstrate (By similarity). The synergistic activity of LPMO9B with xylanase Xyl10G or cellulase Cel5B shows efficient bioconversion rates of 56 and 174 percent in pretreated kenaf (Hibiscus cannabinus) and oak, respectively (PubMed:26138398).</text>
</comment>
<comment type="catalytic activity">
    <reaction evidence="7">
        <text>[(1-&gt;4)-beta-D-glucosyl]n+m + reduced acceptor + O2 = 4-dehydro-beta-D-glucosyl-[(1-&gt;4)-beta-D-glucosyl]n-1 + [(1-&gt;4)-beta-D-glucosyl]m + acceptor + H2O.</text>
        <dbReference type="EC" id="1.14.99.56"/>
    </reaction>
</comment>
<comment type="cofactor">
    <cofactor evidence="2">
        <name>Cu(2+)</name>
        <dbReference type="ChEBI" id="CHEBI:29036"/>
    </cofactor>
    <text evidence="2">Binds 1 copper ion per subunit.</text>
</comment>
<comment type="subcellular location">
    <subcellularLocation>
        <location evidence="11">Secreted</location>
    </subcellularLocation>
</comment>
<comment type="biotechnology">
    <text evidence="6">Lignocellulose is the most abundant polymeric composite on Earth and is a recalcitrant but promising renewable substrate for industrial biotechnology applications. Together with cellobiose dehydrogenases (CDHs) an enzymatic system capable of oxidative cellulose cleavage is formed, which increases the efficiency of cellulases and put LPMOs at focus of biofuel research.</text>
</comment>
<comment type="similarity">
    <text evidence="10">Belongs to the polysaccharide monooxygenase AA9 family.</text>
</comment>